<gene>
    <name evidence="1" type="primary">rpmA</name>
    <name type="ordered locus">Adeh_4181</name>
</gene>
<feature type="chain" id="PRO_1000017403" description="Large ribosomal subunit protein bL27">
    <location>
        <begin position="1"/>
        <end position="85"/>
    </location>
</feature>
<feature type="region of interest" description="Disordered" evidence="2">
    <location>
        <begin position="1"/>
        <end position="22"/>
    </location>
</feature>
<organism>
    <name type="scientific">Anaeromyxobacter dehalogenans (strain 2CP-C)</name>
    <dbReference type="NCBI Taxonomy" id="290397"/>
    <lineage>
        <taxon>Bacteria</taxon>
        <taxon>Pseudomonadati</taxon>
        <taxon>Myxococcota</taxon>
        <taxon>Myxococcia</taxon>
        <taxon>Myxococcales</taxon>
        <taxon>Cystobacterineae</taxon>
        <taxon>Anaeromyxobacteraceae</taxon>
        <taxon>Anaeromyxobacter</taxon>
    </lineage>
</organism>
<comment type="similarity">
    <text evidence="1">Belongs to the bacterial ribosomal protein bL27 family.</text>
</comment>
<proteinExistence type="inferred from homology"/>
<reference key="1">
    <citation type="submission" date="2006-01" db="EMBL/GenBank/DDBJ databases">
        <title>Complete sequence of Anaeromyxobacter dehalogenans 2CP-C.</title>
        <authorList>
            <person name="Copeland A."/>
            <person name="Lucas S."/>
            <person name="Lapidus A."/>
            <person name="Barry K."/>
            <person name="Detter J.C."/>
            <person name="Glavina T."/>
            <person name="Hammon N."/>
            <person name="Israni S."/>
            <person name="Pitluck S."/>
            <person name="Brettin T."/>
            <person name="Bruce D."/>
            <person name="Han C."/>
            <person name="Tapia R."/>
            <person name="Gilna P."/>
            <person name="Kiss H."/>
            <person name="Schmutz J."/>
            <person name="Larimer F."/>
            <person name="Land M."/>
            <person name="Kyrpides N."/>
            <person name="Anderson I."/>
            <person name="Sanford R.A."/>
            <person name="Ritalahti K.M."/>
            <person name="Thomas H.S."/>
            <person name="Kirby J.R."/>
            <person name="Zhulin I.B."/>
            <person name="Loeffler F.E."/>
            <person name="Richardson P."/>
        </authorList>
    </citation>
    <scope>NUCLEOTIDE SEQUENCE [LARGE SCALE GENOMIC DNA]</scope>
    <source>
        <strain>2CP-C</strain>
    </source>
</reference>
<dbReference type="EMBL" id="CP000251">
    <property type="protein sequence ID" value="ABC83945.1"/>
    <property type="molecule type" value="Genomic_DNA"/>
</dbReference>
<dbReference type="RefSeq" id="WP_011423227.1">
    <property type="nucleotide sequence ID" value="NC_007760.1"/>
</dbReference>
<dbReference type="SMR" id="Q2IH83"/>
<dbReference type="STRING" id="290397.Adeh_4181"/>
<dbReference type="KEGG" id="ade:Adeh_4181"/>
<dbReference type="eggNOG" id="COG0211">
    <property type="taxonomic scope" value="Bacteria"/>
</dbReference>
<dbReference type="HOGENOM" id="CLU_095424_4_0_7"/>
<dbReference type="OrthoDB" id="9803474at2"/>
<dbReference type="Proteomes" id="UP000001935">
    <property type="component" value="Chromosome"/>
</dbReference>
<dbReference type="GO" id="GO:0022625">
    <property type="term" value="C:cytosolic large ribosomal subunit"/>
    <property type="evidence" value="ECO:0007669"/>
    <property type="project" value="TreeGrafter"/>
</dbReference>
<dbReference type="GO" id="GO:0003735">
    <property type="term" value="F:structural constituent of ribosome"/>
    <property type="evidence" value="ECO:0007669"/>
    <property type="project" value="InterPro"/>
</dbReference>
<dbReference type="GO" id="GO:0006412">
    <property type="term" value="P:translation"/>
    <property type="evidence" value="ECO:0007669"/>
    <property type="project" value="UniProtKB-UniRule"/>
</dbReference>
<dbReference type="FunFam" id="2.40.50.100:FF:000060">
    <property type="entry name" value="Apicoplast ribosomal protein L27"/>
    <property type="match status" value="1"/>
</dbReference>
<dbReference type="Gene3D" id="2.40.50.100">
    <property type="match status" value="1"/>
</dbReference>
<dbReference type="HAMAP" id="MF_00539">
    <property type="entry name" value="Ribosomal_bL27"/>
    <property type="match status" value="1"/>
</dbReference>
<dbReference type="InterPro" id="IPR001684">
    <property type="entry name" value="Ribosomal_bL27"/>
</dbReference>
<dbReference type="NCBIfam" id="TIGR00062">
    <property type="entry name" value="L27"/>
    <property type="match status" value="1"/>
</dbReference>
<dbReference type="PANTHER" id="PTHR15893:SF0">
    <property type="entry name" value="LARGE RIBOSOMAL SUBUNIT PROTEIN BL27M"/>
    <property type="match status" value="1"/>
</dbReference>
<dbReference type="PANTHER" id="PTHR15893">
    <property type="entry name" value="RIBOSOMAL PROTEIN L27"/>
    <property type="match status" value="1"/>
</dbReference>
<dbReference type="Pfam" id="PF01016">
    <property type="entry name" value="Ribosomal_L27"/>
    <property type="match status" value="1"/>
</dbReference>
<dbReference type="PRINTS" id="PR00063">
    <property type="entry name" value="RIBOSOMALL27"/>
</dbReference>
<dbReference type="SUPFAM" id="SSF110324">
    <property type="entry name" value="Ribosomal L27 protein-like"/>
    <property type="match status" value="1"/>
</dbReference>
<accession>Q2IH83</accession>
<evidence type="ECO:0000255" key="1">
    <source>
        <dbReference type="HAMAP-Rule" id="MF_00539"/>
    </source>
</evidence>
<evidence type="ECO:0000256" key="2">
    <source>
        <dbReference type="SAM" id="MobiDB-lite"/>
    </source>
</evidence>
<evidence type="ECO:0000305" key="3"/>
<keyword id="KW-1185">Reference proteome</keyword>
<keyword id="KW-0687">Ribonucleoprotein</keyword>
<keyword id="KW-0689">Ribosomal protein</keyword>
<name>RL27_ANADE</name>
<sequence length="85" mass="9091">MAHKKGQGSSRNGRDSPGQRRGIKVYGSEKVVAGNILVRQVGTLVHPGQNVGMGKDFTLFALIDGTVKYSRTRGDRRVVSVLPGA</sequence>
<protein>
    <recommendedName>
        <fullName evidence="1">Large ribosomal subunit protein bL27</fullName>
    </recommendedName>
    <alternativeName>
        <fullName evidence="3">50S ribosomal protein L27</fullName>
    </alternativeName>
</protein>